<comment type="function">
    <text evidence="1">Specifically dimethylates two adjacent adenosines (A1518 and A1519) in the loop of a conserved hairpin near the 3'-end of 16S rRNA in the 30S particle. May play a critical role in biogenesis of 30S subunits.</text>
</comment>
<comment type="catalytic activity">
    <reaction evidence="1">
        <text>adenosine(1518)/adenosine(1519) in 16S rRNA + 4 S-adenosyl-L-methionine = N(6)-dimethyladenosine(1518)/N(6)-dimethyladenosine(1519) in 16S rRNA + 4 S-adenosyl-L-homocysteine + 4 H(+)</text>
        <dbReference type="Rhea" id="RHEA:19609"/>
        <dbReference type="Rhea" id="RHEA-COMP:10232"/>
        <dbReference type="Rhea" id="RHEA-COMP:10233"/>
        <dbReference type="ChEBI" id="CHEBI:15378"/>
        <dbReference type="ChEBI" id="CHEBI:57856"/>
        <dbReference type="ChEBI" id="CHEBI:59789"/>
        <dbReference type="ChEBI" id="CHEBI:74411"/>
        <dbReference type="ChEBI" id="CHEBI:74493"/>
        <dbReference type="EC" id="2.1.1.182"/>
    </reaction>
</comment>
<comment type="subcellular location">
    <subcellularLocation>
        <location evidence="1">Cytoplasm</location>
    </subcellularLocation>
</comment>
<comment type="similarity">
    <text evidence="1">Belongs to the class I-like SAM-binding methyltransferase superfamily. rRNA adenine N(6)-methyltransferase family. RsmA subfamily.</text>
</comment>
<protein>
    <recommendedName>
        <fullName evidence="1">Ribosomal RNA small subunit methyltransferase A</fullName>
        <ecNumber evidence="1">2.1.1.182</ecNumber>
    </recommendedName>
    <alternativeName>
        <fullName evidence="1">16S rRNA (adenine(1518)-N(6)/adenine(1519)-N(6))-dimethyltransferase</fullName>
    </alternativeName>
    <alternativeName>
        <fullName evidence="1">16S rRNA dimethyladenosine transferase</fullName>
    </alternativeName>
    <alternativeName>
        <fullName evidence="1">16S rRNA dimethylase</fullName>
    </alternativeName>
    <alternativeName>
        <fullName evidence="1">S-adenosylmethionine-6-N', N'-adenosyl(rRNA) dimethyltransferase</fullName>
    </alternativeName>
</protein>
<gene>
    <name evidence="1" type="primary">rsmA</name>
    <name evidence="1" type="synonym">ksgA</name>
    <name type="ordered locus">BALH_0037</name>
</gene>
<name>RSMA_BACAH</name>
<sequence length="292" mass="32780">MKDIATPNRTKDIVEKYGFSFKKSLGQNFLIDTNVLNRIVDHAEIGSESGAIEIGPGIGALTEQLAKRAKKVVAFEIDQRLLPILDETLAPYGNVTVINKDVLKADVHEVFSEQFEEGQDVMVVANLPYYITTPILFKLLEEKLPVRGFVVMMQKEVGDRLAAKPGTKEYGSLSIAIQYYTEVETVMTVPRTVFVPQPNVDSAIIRLLKRPKPVVEVTDEIFFFEVVRASFAQRRKTLMNNLSNNLNGFPKDKELLDRILTEVGIDPKRRGETLSIEEFATLSNALVLHKLS</sequence>
<organism>
    <name type="scientific">Bacillus thuringiensis (strain Al Hakam)</name>
    <dbReference type="NCBI Taxonomy" id="412694"/>
    <lineage>
        <taxon>Bacteria</taxon>
        <taxon>Bacillati</taxon>
        <taxon>Bacillota</taxon>
        <taxon>Bacilli</taxon>
        <taxon>Bacillales</taxon>
        <taxon>Bacillaceae</taxon>
        <taxon>Bacillus</taxon>
        <taxon>Bacillus cereus group</taxon>
    </lineage>
</organism>
<feature type="chain" id="PRO_1000056594" description="Ribosomal RNA small subunit methyltransferase A">
    <location>
        <begin position="1"/>
        <end position="292"/>
    </location>
</feature>
<feature type="binding site" evidence="1">
    <location>
        <position position="28"/>
    </location>
    <ligand>
        <name>S-adenosyl-L-methionine</name>
        <dbReference type="ChEBI" id="CHEBI:59789"/>
    </ligand>
</feature>
<feature type="binding site" evidence="1">
    <location>
        <position position="30"/>
    </location>
    <ligand>
        <name>S-adenosyl-L-methionine</name>
        <dbReference type="ChEBI" id="CHEBI:59789"/>
    </ligand>
</feature>
<feature type="binding site" evidence="1">
    <location>
        <position position="55"/>
    </location>
    <ligand>
        <name>S-adenosyl-L-methionine</name>
        <dbReference type="ChEBI" id="CHEBI:59789"/>
    </ligand>
</feature>
<feature type="binding site" evidence="1">
    <location>
        <position position="76"/>
    </location>
    <ligand>
        <name>S-adenosyl-L-methionine</name>
        <dbReference type="ChEBI" id="CHEBI:59789"/>
    </ligand>
</feature>
<feature type="binding site" evidence="1">
    <location>
        <position position="101"/>
    </location>
    <ligand>
        <name>S-adenosyl-L-methionine</name>
        <dbReference type="ChEBI" id="CHEBI:59789"/>
    </ligand>
</feature>
<feature type="binding site" evidence="1">
    <location>
        <position position="126"/>
    </location>
    <ligand>
        <name>S-adenosyl-L-methionine</name>
        <dbReference type="ChEBI" id="CHEBI:59789"/>
    </ligand>
</feature>
<accession>A0R8B4</accession>
<keyword id="KW-0963">Cytoplasm</keyword>
<keyword id="KW-0489">Methyltransferase</keyword>
<keyword id="KW-0694">RNA-binding</keyword>
<keyword id="KW-0698">rRNA processing</keyword>
<keyword id="KW-0949">S-adenosyl-L-methionine</keyword>
<keyword id="KW-0808">Transferase</keyword>
<dbReference type="EC" id="2.1.1.182" evidence="1"/>
<dbReference type="EMBL" id="CP000485">
    <property type="protein sequence ID" value="ABK83457.1"/>
    <property type="molecule type" value="Genomic_DNA"/>
</dbReference>
<dbReference type="RefSeq" id="WP_000651551.1">
    <property type="nucleotide sequence ID" value="NC_008600.1"/>
</dbReference>
<dbReference type="SMR" id="A0R8B4"/>
<dbReference type="KEGG" id="btl:BALH_0037"/>
<dbReference type="HOGENOM" id="CLU_041220_0_0_9"/>
<dbReference type="GO" id="GO:0005829">
    <property type="term" value="C:cytosol"/>
    <property type="evidence" value="ECO:0007669"/>
    <property type="project" value="TreeGrafter"/>
</dbReference>
<dbReference type="GO" id="GO:0052908">
    <property type="term" value="F:16S rRNA (adenine(1518)-N(6)/adenine(1519)-N(6))-dimethyltransferase activity"/>
    <property type="evidence" value="ECO:0007669"/>
    <property type="project" value="UniProtKB-EC"/>
</dbReference>
<dbReference type="GO" id="GO:0003723">
    <property type="term" value="F:RNA binding"/>
    <property type="evidence" value="ECO:0007669"/>
    <property type="project" value="UniProtKB-KW"/>
</dbReference>
<dbReference type="CDD" id="cd02440">
    <property type="entry name" value="AdoMet_MTases"/>
    <property type="match status" value="1"/>
</dbReference>
<dbReference type="FunFam" id="1.10.8.100:FF:000002">
    <property type="entry name" value="Ribosomal RNA small subunit methyltransferase A"/>
    <property type="match status" value="1"/>
</dbReference>
<dbReference type="FunFam" id="3.40.50.150:FF:000023">
    <property type="entry name" value="Ribosomal RNA small subunit methyltransferase A"/>
    <property type="match status" value="1"/>
</dbReference>
<dbReference type="Gene3D" id="1.10.8.100">
    <property type="entry name" value="Ribosomal RNA adenine dimethylase-like, domain 2"/>
    <property type="match status" value="1"/>
</dbReference>
<dbReference type="Gene3D" id="3.40.50.150">
    <property type="entry name" value="Vaccinia Virus protein VP39"/>
    <property type="match status" value="1"/>
</dbReference>
<dbReference type="HAMAP" id="MF_00607">
    <property type="entry name" value="16SrRNA_methyltr_A"/>
    <property type="match status" value="1"/>
</dbReference>
<dbReference type="InterPro" id="IPR001737">
    <property type="entry name" value="KsgA/Erm"/>
</dbReference>
<dbReference type="InterPro" id="IPR023165">
    <property type="entry name" value="rRNA_Ade_diMease-like_C"/>
</dbReference>
<dbReference type="InterPro" id="IPR020596">
    <property type="entry name" value="rRNA_Ade_Mease_Trfase_CS"/>
</dbReference>
<dbReference type="InterPro" id="IPR020598">
    <property type="entry name" value="rRNA_Ade_methylase_Trfase_N"/>
</dbReference>
<dbReference type="InterPro" id="IPR011530">
    <property type="entry name" value="rRNA_adenine_dimethylase"/>
</dbReference>
<dbReference type="InterPro" id="IPR029063">
    <property type="entry name" value="SAM-dependent_MTases_sf"/>
</dbReference>
<dbReference type="NCBIfam" id="TIGR00755">
    <property type="entry name" value="ksgA"/>
    <property type="match status" value="1"/>
</dbReference>
<dbReference type="PANTHER" id="PTHR11727">
    <property type="entry name" value="DIMETHYLADENOSINE TRANSFERASE"/>
    <property type="match status" value="1"/>
</dbReference>
<dbReference type="PANTHER" id="PTHR11727:SF7">
    <property type="entry name" value="DIMETHYLADENOSINE TRANSFERASE-RELATED"/>
    <property type="match status" value="1"/>
</dbReference>
<dbReference type="Pfam" id="PF00398">
    <property type="entry name" value="RrnaAD"/>
    <property type="match status" value="1"/>
</dbReference>
<dbReference type="SMART" id="SM00650">
    <property type="entry name" value="rADc"/>
    <property type="match status" value="1"/>
</dbReference>
<dbReference type="SUPFAM" id="SSF53335">
    <property type="entry name" value="S-adenosyl-L-methionine-dependent methyltransferases"/>
    <property type="match status" value="1"/>
</dbReference>
<dbReference type="PROSITE" id="PS01131">
    <property type="entry name" value="RRNA_A_DIMETH"/>
    <property type="match status" value="1"/>
</dbReference>
<dbReference type="PROSITE" id="PS51689">
    <property type="entry name" value="SAM_RNA_A_N6_MT"/>
    <property type="match status" value="1"/>
</dbReference>
<proteinExistence type="inferred from homology"/>
<evidence type="ECO:0000255" key="1">
    <source>
        <dbReference type="HAMAP-Rule" id="MF_00607"/>
    </source>
</evidence>
<reference key="1">
    <citation type="journal article" date="2007" name="J. Bacteriol.">
        <title>The complete genome sequence of Bacillus thuringiensis Al Hakam.</title>
        <authorList>
            <person name="Challacombe J.F."/>
            <person name="Altherr M.R."/>
            <person name="Xie G."/>
            <person name="Bhotika S.S."/>
            <person name="Brown N."/>
            <person name="Bruce D."/>
            <person name="Campbell C.S."/>
            <person name="Campbell M.L."/>
            <person name="Chen J."/>
            <person name="Chertkov O."/>
            <person name="Cleland C."/>
            <person name="Dimitrijevic M."/>
            <person name="Doggett N.A."/>
            <person name="Fawcett J.J."/>
            <person name="Glavina T."/>
            <person name="Goodwin L.A."/>
            <person name="Green L.D."/>
            <person name="Han C.S."/>
            <person name="Hill K.K."/>
            <person name="Hitchcock P."/>
            <person name="Jackson P.J."/>
            <person name="Keim P."/>
            <person name="Kewalramani A.R."/>
            <person name="Longmire J."/>
            <person name="Lucas S."/>
            <person name="Malfatti S."/>
            <person name="Martinez D."/>
            <person name="McMurry K."/>
            <person name="Meincke L.J."/>
            <person name="Misra M."/>
            <person name="Moseman B.L."/>
            <person name="Mundt M."/>
            <person name="Munk A.C."/>
            <person name="Okinaka R.T."/>
            <person name="Parson-Quintana B."/>
            <person name="Reilly L.P."/>
            <person name="Richardson P."/>
            <person name="Robinson D.L."/>
            <person name="Saunders E."/>
            <person name="Tapia R."/>
            <person name="Tesmer J.G."/>
            <person name="Thayer N."/>
            <person name="Thompson L.S."/>
            <person name="Tice H."/>
            <person name="Ticknor L.O."/>
            <person name="Wills P.L."/>
            <person name="Gilna P."/>
            <person name="Brettin T.S."/>
        </authorList>
    </citation>
    <scope>NUCLEOTIDE SEQUENCE [LARGE SCALE GENOMIC DNA]</scope>
    <source>
        <strain>Al Hakam</strain>
    </source>
</reference>